<sequence length="194" mass="21455">MTTGKIYFATTNLKKLNEVKEFLKTDIDHMRISMTEIQGPSEKIVEHKLDQAAPFINPKDAVIVDDTSFSLEALGGFPGVYVKDFLEIGTRKIWEIVEKIGNKSATAVCSLGIAHYENGEIVKKVFSGKLKGSITEPEKDCKTEFGYIFIPDGFNGVLKNMPTDEKNRISHRGIASRSLAAYMASKGIIKTHGP</sequence>
<evidence type="ECO:0000250" key="1"/>
<evidence type="ECO:0000250" key="2">
    <source>
        <dbReference type="UniProtKB" id="Q9BY32"/>
    </source>
</evidence>
<evidence type="ECO:0000305" key="3"/>
<organism>
    <name type="scientific">Encephalitozoon intestinalis (strain ATCC 50506)</name>
    <name type="common">Microsporidian parasite</name>
    <name type="synonym">Septata intestinalis</name>
    <dbReference type="NCBI Taxonomy" id="876142"/>
    <lineage>
        <taxon>Eukaryota</taxon>
        <taxon>Fungi</taxon>
        <taxon>Fungi incertae sedis</taxon>
        <taxon>Microsporidia</taxon>
        <taxon>Unikaryonidae</taxon>
        <taxon>Encephalitozoon</taxon>
    </lineage>
</organism>
<name>ITPA_ENCIT</name>
<keyword id="KW-0963">Cytoplasm</keyword>
<keyword id="KW-0378">Hydrolase</keyword>
<keyword id="KW-0460">Magnesium</keyword>
<keyword id="KW-0464">Manganese</keyword>
<keyword id="KW-0479">Metal-binding</keyword>
<keyword id="KW-0546">Nucleotide metabolism</keyword>
<keyword id="KW-0547">Nucleotide-binding</keyword>
<keyword id="KW-0539">Nucleus</keyword>
<protein>
    <recommendedName>
        <fullName>Inosine triphosphate pyrophosphatase</fullName>
        <shortName>ITPase</shortName>
        <shortName>Inosine triphosphatase</shortName>
        <ecNumber evidence="2">3.6.1.66</ecNumber>
    </recommendedName>
    <alternativeName>
        <fullName>Non-canonical purine NTP pyrophosphatase</fullName>
    </alternativeName>
    <alternativeName>
        <fullName>Non-standard purine NTP pyrophosphatase</fullName>
    </alternativeName>
    <alternativeName>
        <fullName>Nucleoside-triphosphate diphosphatase</fullName>
    </alternativeName>
    <alternativeName>
        <fullName>Nucleoside-triphosphate pyrophosphatase</fullName>
        <shortName>NTPase</shortName>
    </alternativeName>
    <alternativeName>
        <fullName>XTP/dITP diphosphatase</fullName>
    </alternativeName>
</protein>
<reference key="1">
    <citation type="journal article" date="2010" name="Nat. Commun.">
        <title>The complete sequence of the smallest known nuclear genome from the microsporidian Encephalitozoon intestinalis.</title>
        <authorList>
            <person name="Corradi N."/>
            <person name="Pombert J.-F."/>
            <person name="Farinelli L."/>
            <person name="Didier E.S."/>
            <person name="Keeling P.J."/>
        </authorList>
    </citation>
    <scope>NUCLEOTIDE SEQUENCE [LARGE SCALE GENOMIC DNA]</scope>
    <source>
        <strain>ATCC 50506</strain>
    </source>
</reference>
<feature type="chain" id="PRO_0000413140" description="Inosine triphosphate pyrophosphatase">
    <location>
        <begin position="1"/>
        <end position="194"/>
    </location>
</feature>
<feature type="binding site" evidence="2">
    <location>
        <begin position="10"/>
        <end position="15"/>
    </location>
    <ligand>
        <name>ITP</name>
        <dbReference type="ChEBI" id="CHEBI:61402"/>
    </ligand>
</feature>
<feature type="binding site" evidence="2">
    <location>
        <position position="36"/>
    </location>
    <ligand>
        <name>Mg(2+)</name>
        <dbReference type="ChEBI" id="CHEBI:18420"/>
    </ligand>
</feature>
<feature type="binding site" evidence="2">
    <location>
        <position position="48"/>
    </location>
    <ligand>
        <name>ITP</name>
        <dbReference type="ChEBI" id="CHEBI:61402"/>
    </ligand>
</feature>
<feature type="binding site" evidence="2">
    <location>
        <begin position="66"/>
        <end position="67"/>
    </location>
    <ligand>
        <name>ITP</name>
        <dbReference type="ChEBI" id="CHEBI:61402"/>
    </ligand>
</feature>
<feature type="binding site" evidence="2">
    <location>
        <position position="83"/>
    </location>
    <ligand>
        <name>ITP</name>
        <dbReference type="ChEBI" id="CHEBI:61402"/>
    </ligand>
</feature>
<feature type="binding site" evidence="2">
    <location>
        <position position="166"/>
    </location>
    <ligand>
        <name>ITP</name>
        <dbReference type="ChEBI" id="CHEBI:61402"/>
    </ligand>
</feature>
<feature type="binding site" evidence="2">
    <location>
        <begin position="171"/>
        <end position="172"/>
    </location>
    <ligand>
        <name>ITP</name>
        <dbReference type="ChEBI" id="CHEBI:61402"/>
    </ligand>
</feature>
<comment type="function">
    <text evidence="2">Pyrophosphatase that hydrolyzes non-canonical purine nucleotides such as inosine triphosphate (ITP), deoxyinosine triphosphate (dITP) or xanthosine 5'-triphosphate (XTP) to their respective monophosphate derivatives. The enzyme does not distinguish between the deoxy- and ribose forms. Probably excludes non-canonical purines from RNA and DNA precursor pools, thus preventing their incorporation into RNA and DNA and avoiding chromosomal lesions.</text>
</comment>
<comment type="catalytic activity">
    <reaction evidence="2">
        <text>ITP + H2O = IMP + diphosphate + H(+)</text>
        <dbReference type="Rhea" id="RHEA:29399"/>
        <dbReference type="ChEBI" id="CHEBI:15377"/>
        <dbReference type="ChEBI" id="CHEBI:15378"/>
        <dbReference type="ChEBI" id="CHEBI:33019"/>
        <dbReference type="ChEBI" id="CHEBI:58053"/>
        <dbReference type="ChEBI" id="CHEBI:61402"/>
        <dbReference type="EC" id="3.6.1.66"/>
    </reaction>
    <physiologicalReaction direction="left-to-right" evidence="2">
        <dbReference type="Rhea" id="RHEA:29400"/>
    </physiologicalReaction>
</comment>
<comment type="catalytic activity">
    <reaction evidence="2">
        <text>dITP + H2O = dIMP + diphosphate + H(+)</text>
        <dbReference type="Rhea" id="RHEA:28342"/>
        <dbReference type="ChEBI" id="CHEBI:15377"/>
        <dbReference type="ChEBI" id="CHEBI:15378"/>
        <dbReference type="ChEBI" id="CHEBI:33019"/>
        <dbReference type="ChEBI" id="CHEBI:61194"/>
        <dbReference type="ChEBI" id="CHEBI:61382"/>
        <dbReference type="EC" id="3.6.1.66"/>
    </reaction>
    <physiologicalReaction direction="left-to-right" evidence="2">
        <dbReference type="Rhea" id="RHEA:28343"/>
    </physiologicalReaction>
</comment>
<comment type="catalytic activity">
    <reaction evidence="2">
        <text>XTP + H2O = XMP + diphosphate + H(+)</text>
        <dbReference type="Rhea" id="RHEA:28610"/>
        <dbReference type="ChEBI" id="CHEBI:15377"/>
        <dbReference type="ChEBI" id="CHEBI:15378"/>
        <dbReference type="ChEBI" id="CHEBI:33019"/>
        <dbReference type="ChEBI" id="CHEBI:57464"/>
        <dbReference type="ChEBI" id="CHEBI:61314"/>
        <dbReference type="EC" id="3.6.1.66"/>
    </reaction>
    <physiologicalReaction direction="left-to-right" evidence="2">
        <dbReference type="Rhea" id="RHEA:28611"/>
    </physiologicalReaction>
</comment>
<comment type="cofactor">
    <cofactor evidence="2">
        <name>Mg(2+)</name>
        <dbReference type="ChEBI" id="CHEBI:18420"/>
    </cofactor>
    <cofactor evidence="2">
        <name>Mn(2+)</name>
        <dbReference type="ChEBI" id="CHEBI:29035"/>
    </cofactor>
    <text evidence="2">Binds 1 divalent metal cation per subunit; can use either Mg(2+) or Mn(2+).</text>
</comment>
<comment type="subunit">
    <text evidence="2">Homodimer.</text>
</comment>
<comment type="subcellular location">
    <subcellularLocation>
        <location evidence="2">Cytoplasm</location>
    </subcellularLocation>
    <subcellularLocation>
        <location evidence="1">Nucleus</location>
    </subcellularLocation>
</comment>
<comment type="similarity">
    <text evidence="3">Belongs to the HAM1 NTPase family.</text>
</comment>
<accession>E0S6S0</accession>
<dbReference type="EC" id="3.6.1.66" evidence="2"/>
<dbReference type="EMBL" id="CP001945">
    <property type="protein sequence ID" value="ADM11405.1"/>
    <property type="molecule type" value="Genomic_DNA"/>
</dbReference>
<dbReference type="RefSeq" id="XP_003072765.1">
    <property type="nucleotide sequence ID" value="XM_003072719.1"/>
</dbReference>
<dbReference type="SMR" id="E0S6S0"/>
<dbReference type="GeneID" id="9699006"/>
<dbReference type="KEGG" id="ein:Eint_041160"/>
<dbReference type="VEuPathDB" id="MicrosporidiaDB:Eint_041160"/>
<dbReference type="HOGENOM" id="CLU_082080_1_0_1"/>
<dbReference type="OrthoDB" id="6288734at2759"/>
<dbReference type="Proteomes" id="UP000002313">
    <property type="component" value="Chromosome IV"/>
</dbReference>
<dbReference type="GO" id="GO:0005737">
    <property type="term" value="C:cytoplasm"/>
    <property type="evidence" value="ECO:0007669"/>
    <property type="project" value="UniProtKB-SubCell"/>
</dbReference>
<dbReference type="GO" id="GO:0005634">
    <property type="term" value="C:nucleus"/>
    <property type="evidence" value="ECO:0007669"/>
    <property type="project" value="UniProtKB-SubCell"/>
</dbReference>
<dbReference type="GO" id="GO:0035870">
    <property type="term" value="F:dITP diphosphatase activity"/>
    <property type="evidence" value="ECO:0007669"/>
    <property type="project" value="RHEA"/>
</dbReference>
<dbReference type="GO" id="GO:0036220">
    <property type="term" value="F:ITP diphosphatase activity"/>
    <property type="evidence" value="ECO:0007669"/>
    <property type="project" value="RHEA"/>
</dbReference>
<dbReference type="GO" id="GO:0046872">
    <property type="term" value="F:metal ion binding"/>
    <property type="evidence" value="ECO:0007669"/>
    <property type="project" value="UniProtKB-KW"/>
</dbReference>
<dbReference type="GO" id="GO:0000166">
    <property type="term" value="F:nucleotide binding"/>
    <property type="evidence" value="ECO:0007669"/>
    <property type="project" value="UniProtKB-KW"/>
</dbReference>
<dbReference type="GO" id="GO:0036222">
    <property type="term" value="F:XTP diphosphatase activity"/>
    <property type="evidence" value="ECO:0007669"/>
    <property type="project" value="RHEA"/>
</dbReference>
<dbReference type="GO" id="GO:0009143">
    <property type="term" value="P:nucleoside triphosphate catabolic process"/>
    <property type="evidence" value="ECO:0007669"/>
    <property type="project" value="InterPro"/>
</dbReference>
<dbReference type="GO" id="GO:0009117">
    <property type="term" value="P:nucleotide metabolic process"/>
    <property type="evidence" value="ECO:0007669"/>
    <property type="project" value="UniProtKB-KW"/>
</dbReference>
<dbReference type="CDD" id="cd00515">
    <property type="entry name" value="HAM1"/>
    <property type="match status" value="1"/>
</dbReference>
<dbReference type="Gene3D" id="3.90.950.10">
    <property type="match status" value="1"/>
</dbReference>
<dbReference type="InterPro" id="IPR029001">
    <property type="entry name" value="ITPase-like_fam"/>
</dbReference>
<dbReference type="InterPro" id="IPR002637">
    <property type="entry name" value="RdgB/HAM1"/>
</dbReference>
<dbReference type="PANTHER" id="PTHR11067:SF9">
    <property type="entry name" value="INOSINE TRIPHOSPHATE PYROPHOSPHATASE"/>
    <property type="match status" value="1"/>
</dbReference>
<dbReference type="PANTHER" id="PTHR11067">
    <property type="entry name" value="INOSINE TRIPHOSPHATE PYROPHOSPHATASE/HAM1 PROTEIN"/>
    <property type="match status" value="1"/>
</dbReference>
<dbReference type="Pfam" id="PF01725">
    <property type="entry name" value="Ham1p_like"/>
    <property type="match status" value="1"/>
</dbReference>
<dbReference type="SUPFAM" id="SSF52972">
    <property type="entry name" value="ITPase-like"/>
    <property type="match status" value="1"/>
</dbReference>
<proteinExistence type="inferred from homology"/>
<gene>
    <name type="ORF">Eint_041160</name>
</gene>